<reference key="1">
    <citation type="journal article" date="2008" name="J. Bacteriol.">
        <title>The complete genome sequence of Escherichia coli DH10B: insights into the biology of a laboratory workhorse.</title>
        <authorList>
            <person name="Durfee T."/>
            <person name="Nelson R."/>
            <person name="Baldwin S."/>
            <person name="Plunkett G. III"/>
            <person name="Burland V."/>
            <person name="Mau B."/>
            <person name="Petrosino J.F."/>
            <person name="Qin X."/>
            <person name="Muzny D.M."/>
            <person name="Ayele M."/>
            <person name="Gibbs R.A."/>
            <person name="Csorgo B."/>
            <person name="Posfai G."/>
            <person name="Weinstock G.M."/>
            <person name="Blattner F.R."/>
        </authorList>
    </citation>
    <scope>NUCLEOTIDE SEQUENCE [LARGE SCALE GENOMIC DNA]</scope>
    <source>
        <strain>K12 / DH10B</strain>
    </source>
</reference>
<protein>
    <recommendedName>
        <fullName evidence="1">Small ribosomal subunit protein bS18</fullName>
    </recommendedName>
    <alternativeName>
        <fullName evidence="2">30S ribosomal protein S18</fullName>
    </alternativeName>
</protein>
<evidence type="ECO:0000255" key="1">
    <source>
        <dbReference type="HAMAP-Rule" id="MF_00270"/>
    </source>
</evidence>
<evidence type="ECO:0000305" key="2"/>
<gene>
    <name evidence="1" type="primary">rpsR</name>
    <name type="ordered locus">ECDH10B_4397</name>
</gene>
<accession>B1XDV2</accession>
<dbReference type="EMBL" id="CP000948">
    <property type="protein sequence ID" value="ACB05189.1"/>
    <property type="molecule type" value="Genomic_DNA"/>
</dbReference>
<dbReference type="RefSeq" id="WP_000135199.1">
    <property type="nucleotide sequence ID" value="NC_010473.1"/>
</dbReference>
<dbReference type="SMR" id="B1XDV2"/>
<dbReference type="GeneID" id="98186237"/>
<dbReference type="KEGG" id="ecd:ECDH10B_4397"/>
<dbReference type="HOGENOM" id="CLU_148710_2_3_6"/>
<dbReference type="GO" id="GO:0022627">
    <property type="term" value="C:cytosolic small ribosomal subunit"/>
    <property type="evidence" value="ECO:0007669"/>
    <property type="project" value="TreeGrafter"/>
</dbReference>
<dbReference type="GO" id="GO:0070181">
    <property type="term" value="F:small ribosomal subunit rRNA binding"/>
    <property type="evidence" value="ECO:0007669"/>
    <property type="project" value="TreeGrafter"/>
</dbReference>
<dbReference type="GO" id="GO:0003735">
    <property type="term" value="F:structural constituent of ribosome"/>
    <property type="evidence" value="ECO:0007669"/>
    <property type="project" value="InterPro"/>
</dbReference>
<dbReference type="GO" id="GO:0006412">
    <property type="term" value="P:translation"/>
    <property type="evidence" value="ECO:0007669"/>
    <property type="project" value="UniProtKB-UniRule"/>
</dbReference>
<dbReference type="FunFam" id="4.10.640.10:FF:000001">
    <property type="entry name" value="30S ribosomal protein S18"/>
    <property type="match status" value="1"/>
</dbReference>
<dbReference type="Gene3D" id="4.10.640.10">
    <property type="entry name" value="Ribosomal protein S18"/>
    <property type="match status" value="1"/>
</dbReference>
<dbReference type="HAMAP" id="MF_00270">
    <property type="entry name" value="Ribosomal_bS18"/>
    <property type="match status" value="1"/>
</dbReference>
<dbReference type="InterPro" id="IPR001648">
    <property type="entry name" value="Ribosomal_bS18"/>
</dbReference>
<dbReference type="InterPro" id="IPR018275">
    <property type="entry name" value="Ribosomal_bS18_CS"/>
</dbReference>
<dbReference type="InterPro" id="IPR036870">
    <property type="entry name" value="Ribosomal_bS18_sf"/>
</dbReference>
<dbReference type="NCBIfam" id="TIGR00165">
    <property type="entry name" value="S18"/>
    <property type="match status" value="1"/>
</dbReference>
<dbReference type="PANTHER" id="PTHR13479">
    <property type="entry name" value="30S RIBOSOMAL PROTEIN S18"/>
    <property type="match status" value="1"/>
</dbReference>
<dbReference type="PANTHER" id="PTHR13479:SF40">
    <property type="entry name" value="SMALL RIBOSOMAL SUBUNIT PROTEIN BS18M"/>
    <property type="match status" value="1"/>
</dbReference>
<dbReference type="Pfam" id="PF01084">
    <property type="entry name" value="Ribosomal_S18"/>
    <property type="match status" value="1"/>
</dbReference>
<dbReference type="PRINTS" id="PR00974">
    <property type="entry name" value="RIBOSOMALS18"/>
</dbReference>
<dbReference type="SUPFAM" id="SSF46911">
    <property type="entry name" value="Ribosomal protein S18"/>
    <property type="match status" value="1"/>
</dbReference>
<dbReference type="PROSITE" id="PS00057">
    <property type="entry name" value="RIBOSOMAL_S18"/>
    <property type="match status" value="1"/>
</dbReference>
<organism>
    <name type="scientific">Escherichia coli (strain K12 / DH10B)</name>
    <dbReference type="NCBI Taxonomy" id="316385"/>
    <lineage>
        <taxon>Bacteria</taxon>
        <taxon>Pseudomonadati</taxon>
        <taxon>Pseudomonadota</taxon>
        <taxon>Gammaproteobacteria</taxon>
        <taxon>Enterobacterales</taxon>
        <taxon>Enterobacteriaceae</taxon>
        <taxon>Escherichia</taxon>
    </lineage>
</organism>
<keyword id="KW-0687">Ribonucleoprotein</keyword>
<keyword id="KW-0689">Ribosomal protein</keyword>
<keyword id="KW-0694">RNA-binding</keyword>
<keyword id="KW-0699">rRNA-binding</keyword>
<name>RS18_ECODH</name>
<sequence>MARYFRRRKFCRFTAEGVQEIDYKDIATLKNYITESGKIVPSRITGTRAKYQRQLARAIKRARYLSLLPYTDRHQ</sequence>
<proteinExistence type="inferred from homology"/>
<feature type="chain" id="PRO_1000114419" description="Small ribosomal subunit protein bS18">
    <location>
        <begin position="1"/>
        <end position="75"/>
    </location>
</feature>
<comment type="function">
    <text evidence="1">Binds as a heterodimer with protein bS6 to the central domain of the 16S rRNA, where it helps stabilize the platform of the 30S subunit.</text>
</comment>
<comment type="subunit">
    <text evidence="1">Part of the 30S ribosomal subunit. Forms a tight heterodimer with protein bS6.</text>
</comment>
<comment type="similarity">
    <text evidence="1">Belongs to the bacterial ribosomal protein bS18 family.</text>
</comment>